<name>PG096_VACCA</name>
<organismHost>
    <name type="scientific">Homo sapiens</name>
    <name type="common">Human</name>
    <dbReference type="NCBI Taxonomy" id="9606"/>
</organismHost>
<comment type="function">
    <text evidence="1">Early protein involved in virion morphogenesis. Participates in the formation and elongation of crescent-shaped membrane precursors of immature virions in cytoplasmic factories.</text>
</comment>
<comment type="subunit">
    <text evidence="1">Interacts with OPG158.</text>
</comment>
<comment type="subcellular location">
    <subcellularLocation>
        <location evidence="1">Virion membrane</location>
        <topology evidence="1">Multi-pass membrane protein</topology>
    </subcellularLocation>
    <subcellularLocation>
        <location evidence="1">Host cytoplasm</location>
    </subcellularLocation>
    <subcellularLocation>
        <location evidence="1">Host endoplasmic reticulum membrane</location>
    </subcellularLocation>
    <text evidence="1">Localizes in cytoplasmic virus factories.</text>
</comment>
<comment type="induction">
    <text>Expressed in the early phase of the viral replicative cycle.</text>
</comment>
<comment type="similarity">
    <text evidence="3">Belongs to the orthopoxvirus OPG096 family.</text>
</comment>
<reference key="1">
    <citation type="journal article" date="1998" name="Virology">
        <title>The complete genomic sequence of the modified vaccinia Ankara strain: comparison with other orthopoxviruses.</title>
        <authorList>
            <person name="Antoine G."/>
            <person name="Scheiflinger F."/>
            <person name="Dorner F."/>
            <person name="Falkner F.G."/>
        </authorList>
    </citation>
    <scope>NUCLEOTIDE SEQUENCE [LARGE SCALE GENOMIC DNA]</scope>
</reference>
<reference key="2">
    <citation type="submission" date="2004-04" db="EMBL/GenBank/DDBJ databases">
        <authorList>
            <person name="Esposito J.J."/>
            <person name="Frace M."/>
            <person name="Sammons S.A."/>
            <person name="Olsen-Rasmussen M.S."/>
            <person name="Osborne J."/>
            <person name="Khristova M."/>
            <person name="Wohlhueter R.M."/>
        </authorList>
    </citation>
    <scope>NUCLEOTIDE SEQUENCE [LARGE SCALE GENOMIC DNA]</scope>
    <source>
        <strain>Isolate Acambis 3000</strain>
    </source>
</reference>
<evidence type="ECO:0000250" key="1">
    <source>
        <dbReference type="UniProtKB" id="P07613"/>
    </source>
</evidence>
<evidence type="ECO:0000255" key="2"/>
<evidence type="ECO:0000305" key="3"/>
<accession>Q76RD1</accession>
<feature type="chain" id="PRO_0000099616" description="Protein OPG096">
    <location>
        <begin position="1"/>
        <end position="87"/>
    </location>
</feature>
<feature type="transmembrane region" description="Helical" evidence="2">
    <location>
        <begin position="39"/>
        <end position="59"/>
    </location>
</feature>
<feature type="transmembrane region" description="Helical" evidence="2">
    <location>
        <begin position="67"/>
        <end position="87"/>
    </location>
</feature>
<dbReference type="EMBL" id="U94848">
    <property type="protein sequence ID" value="AAB96499.1"/>
    <property type="molecule type" value="Genomic_DNA"/>
</dbReference>
<dbReference type="EMBL" id="AY603355">
    <property type="protein sequence ID" value="AAT10479.1"/>
    <property type="molecule type" value="Genomic_DNA"/>
</dbReference>
<dbReference type="Proteomes" id="UP000159908">
    <property type="component" value="Segment"/>
</dbReference>
<dbReference type="Proteomes" id="UP000172909">
    <property type="component" value="Segment"/>
</dbReference>
<dbReference type="GO" id="GO:0044167">
    <property type="term" value="C:host cell endoplasmic reticulum membrane"/>
    <property type="evidence" value="ECO:0007669"/>
    <property type="project" value="UniProtKB-SubCell"/>
</dbReference>
<dbReference type="GO" id="GO:0016020">
    <property type="term" value="C:membrane"/>
    <property type="evidence" value="ECO:0007669"/>
    <property type="project" value="UniProtKB-KW"/>
</dbReference>
<dbReference type="GO" id="GO:0055036">
    <property type="term" value="C:virion membrane"/>
    <property type="evidence" value="ECO:0007669"/>
    <property type="project" value="UniProtKB-SubCell"/>
</dbReference>
<dbReference type="InterPro" id="IPR008447">
    <property type="entry name" value="Prot_L2"/>
</dbReference>
<dbReference type="Pfam" id="PF05803">
    <property type="entry name" value="Chordopox_L2"/>
    <property type="match status" value="1"/>
</dbReference>
<proteinExistence type="evidence at transcript level"/>
<sequence>MEVIADRLDDIVKQNIADEKFVDFVIHGLEHQCPAILRPLIRLFIDILLFVIVIYIFTVRLVSRNYQMLLALVALVITLTIFYYFIL</sequence>
<organism>
    <name type="scientific">Vaccinia virus (strain Ankara)</name>
    <name type="common">VACV</name>
    <dbReference type="NCBI Taxonomy" id="126794"/>
    <lineage>
        <taxon>Viruses</taxon>
        <taxon>Varidnaviria</taxon>
        <taxon>Bamfordvirae</taxon>
        <taxon>Nucleocytoviricota</taxon>
        <taxon>Pokkesviricetes</taxon>
        <taxon>Chitovirales</taxon>
        <taxon>Poxviridae</taxon>
        <taxon>Chordopoxvirinae</taxon>
        <taxon>Orthopoxvirus</taxon>
        <taxon>Vaccinia virus</taxon>
    </lineage>
</organism>
<keyword id="KW-0244">Early protein</keyword>
<keyword id="KW-1035">Host cytoplasm</keyword>
<keyword id="KW-1038">Host endoplasmic reticulum</keyword>
<keyword id="KW-1043">Host membrane</keyword>
<keyword id="KW-0472">Membrane</keyword>
<keyword id="KW-0812">Transmembrane</keyword>
<keyword id="KW-1133">Transmembrane helix</keyword>
<keyword id="KW-0946">Virion</keyword>
<protein>
    <recommendedName>
        <fullName>Protein OPG096</fullName>
    </recommendedName>
    <alternativeName>
        <fullName>Protein L2</fullName>
    </alternativeName>
</protein>
<gene>
    <name type="primary">OPG096</name>
    <name type="ordered locus">MVA081R</name>
    <name type="ordered locus">ACAM3000_MVA_081</name>
</gene>